<name>RS20_BREVE</name>
<dbReference type="GO" id="GO:1990904">
    <property type="term" value="C:ribonucleoprotein complex"/>
    <property type="evidence" value="ECO:0007669"/>
    <property type="project" value="UniProtKB-KW"/>
</dbReference>
<dbReference type="GO" id="GO:0005840">
    <property type="term" value="C:ribosome"/>
    <property type="evidence" value="ECO:0007669"/>
    <property type="project" value="UniProtKB-KW"/>
</dbReference>
<dbReference type="GO" id="GO:0019843">
    <property type="term" value="F:rRNA binding"/>
    <property type="evidence" value="ECO:0007669"/>
    <property type="project" value="UniProtKB-KW"/>
</dbReference>
<proteinExistence type="evidence at protein level"/>
<accession>Q9R4P2</accession>
<evidence type="ECO:0000250" key="1"/>
<evidence type="ECO:0000256" key="2">
    <source>
        <dbReference type="SAM" id="MobiDB-lite"/>
    </source>
</evidence>
<evidence type="ECO:0000305" key="3"/>
<protein>
    <recommendedName>
        <fullName evidence="3">Small ribosomal subunit protein bS20</fullName>
    </recommendedName>
    <alternativeName>
        <fullName>30S ribosomal protein S20</fullName>
    </alternativeName>
</protein>
<reference key="1">
    <citation type="journal article" date="1995" name="Int. J. Syst. Bacteriol.">
        <title>Comparative ribosomal protein sequence analyses of a phylogenetically defined genus, Pseudomonas, and its relatives.</title>
        <authorList>
            <person name="Ochi K."/>
        </authorList>
    </citation>
    <scope>PROTEIN SEQUENCE</scope>
    <source>
        <strain>ATCC 11426 / DSM 7226 / JCM 1477 / LMG 2350 / NBRC 12165 / NCIMB 1945 / NCTC 10900</strain>
    </source>
</reference>
<organism>
    <name type="scientific">Brevundimonas vesicularis</name>
    <name type="common">Pseudomonas vesicularis</name>
    <dbReference type="NCBI Taxonomy" id="41276"/>
    <lineage>
        <taxon>Bacteria</taxon>
        <taxon>Pseudomonadati</taxon>
        <taxon>Pseudomonadota</taxon>
        <taxon>Alphaproteobacteria</taxon>
        <taxon>Caulobacterales</taxon>
        <taxon>Caulobacteraceae</taxon>
        <taxon>Brevundimonas</taxon>
    </lineage>
</organism>
<comment type="function">
    <text evidence="1">Binds directly to 16S ribosomal RNA.</text>
</comment>
<comment type="similarity">
    <text evidence="3">Belongs to the bacterial ribosomal protein bS20 family.</text>
</comment>
<feature type="chain" id="PRO_0000223996" description="Small ribosomal subunit protein bS20">
    <location>
        <begin position="1"/>
        <end position="20" status="greater than"/>
    </location>
</feature>
<feature type="region of interest" description="Disordered" evidence="2">
    <location>
        <begin position="1"/>
        <end position="20"/>
    </location>
</feature>
<feature type="compositionally biased region" description="Basic and acidic residues" evidence="2">
    <location>
        <begin position="11"/>
        <end position="20"/>
    </location>
</feature>
<feature type="non-terminal residue">
    <location>
        <position position="20"/>
    </location>
</feature>
<keyword id="KW-0903">Direct protein sequencing</keyword>
<keyword id="KW-0687">Ribonucleoprotein</keyword>
<keyword id="KW-0689">Ribosomal protein</keyword>
<keyword id="KW-0694">RNA-binding</keyword>
<keyword id="KW-0699">rRNA-binding</keyword>
<gene>
    <name type="primary">rpsT</name>
</gene>
<sequence length="20" mass="2209">ANNPGARKAIRKIEARTEVN</sequence>